<feature type="signal peptide" evidence="1">
    <location>
        <begin position="1"/>
        <end position="39"/>
    </location>
</feature>
<feature type="chain" id="PRO_5000123058" description="LPS-assembly protein LptD">
    <location>
        <begin position="40"/>
        <end position="786"/>
    </location>
</feature>
<feature type="region of interest" description="Disordered" evidence="2">
    <location>
        <begin position="767"/>
        <end position="786"/>
    </location>
</feature>
<feature type="compositionally biased region" description="Pro residues" evidence="2">
    <location>
        <begin position="770"/>
        <end position="779"/>
    </location>
</feature>
<proteinExistence type="inferred from homology"/>
<protein>
    <recommendedName>
        <fullName evidence="1">LPS-assembly protein LptD</fullName>
    </recommendedName>
</protein>
<accession>Q1BTQ5</accession>
<sequence>MPPKPLFPNVFPGDGAPRKRRLALALLAVPGLVPAVSYAQLSGAAAQPQPLDSPWDLRLAPQLEDHPLKDGAKPAAFVIADHTSGTAEQDLAAKGSAELRRGDAVVKADAIHYDQDTDMADAYGQVKVINGGTSFAGPEAHLKIEANQGFMTAPKYHFNVTGGSGSAERVDMVDNERSVFVNGTYTACQCSTNPAWYIKGSRFDFDTGADEGTARNGVLFFQGVPIFASPWMTFPLSGERRSGLLPPTFSMNSSNGFELSLPYYFNIAPNRDLTLTPRIISRRGVMTEATFRYLSPSYSGTFTANYLPDDRLAHRNRYAIYWQHQQNFGGGFGGYVYYNKVSDNTYPEDLGSANQFINGTQTLYQQEAGLTYNNGPWSVLARYQHWQTLPPSIAPYSREPQLNVKYTKYNVGGFDFGAEADYSRFRITTADATEGDRIVFNPYISYGVYGPGYFVVPKVQYHFASYDLNYLSSTTPNSPKRFTESIPTVTFDTGLIFDRSVRLFGQDFIQTLEPRLYYVYTPYRDQSNAPLFDTAESDFGLAEIYQPNTFVGNDRIADANRITAGLTSRFIDPRTGDERARFVIAQQYYFADQRVTLNPGQAAVLARHSDLIVGAALKLGSGFMSETAFQYNQNNNQLVKSSVGFGYSPGERRVINVGYRYTRANTTLDNQPINQFLVSAQWPLTRRLYAIGRFNYDLAGDRVVDGLVGLQYDADCWALGVGVQRAANGINSSGQQNSSTRFMMQLTLKGLSTVDNGLVSAFRAGVPGYTPLPPPPPPMSRFSNYE</sequence>
<reference key="1">
    <citation type="submission" date="2006-05" db="EMBL/GenBank/DDBJ databases">
        <title>Complete sequence of chromosome 1 of Burkholderia cenocepacia AU 1054.</title>
        <authorList>
            <consortium name="US DOE Joint Genome Institute"/>
            <person name="Copeland A."/>
            <person name="Lucas S."/>
            <person name="Lapidus A."/>
            <person name="Barry K."/>
            <person name="Detter J.C."/>
            <person name="Glavina del Rio T."/>
            <person name="Hammon N."/>
            <person name="Israni S."/>
            <person name="Dalin E."/>
            <person name="Tice H."/>
            <person name="Pitluck S."/>
            <person name="Chain P."/>
            <person name="Malfatti S."/>
            <person name="Shin M."/>
            <person name="Vergez L."/>
            <person name="Schmutz J."/>
            <person name="Larimer F."/>
            <person name="Land M."/>
            <person name="Hauser L."/>
            <person name="Kyrpides N."/>
            <person name="Lykidis A."/>
            <person name="LiPuma J.J."/>
            <person name="Konstantinidis K."/>
            <person name="Tiedje J.M."/>
            <person name="Richardson P."/>
        </authorList>
    </citation>
    <scope>NUCLEOTIDE SEQUENCE [LARGE SCALE GENOMIC DNA]</scope>
    <source>
        <strain>AU 1054</strain>
    </source>
</reference>
<gene>
    <name evidence="1" type="primary">lptD</name>
    <name type="synonym">imp</name>
    <name type="synonym">ostA</name>
    <name type="ordered locus">Bcen_2099</name>
</gene>
<dbReference type="EMBL" id="CP000378">
    <property type="protein sequence ID" value="ABF77000.1"/>
    <property type="molecule type" value="Genomic_DNA"/>
</dbReference>
<dbReference type="SMR" id="Q1BTQ5"/>
<dbReference type="HOGENOM" id="CLU_009039_0_0_4"/>
<dbReference type="GO" id="GO:0009279">
    <property type="term" value="C:cell outer membrane"/>
    <property type="evidence" value="ECO:0007669"/>
    <property type="project" value="UniProtKB-SubCell"/>
</dbReference>
<dbReference type="GO" id="GO:1990351">
    <property type="term" value="C:transporter complex"/>
    <property type="evidence" value="ECO:0007669"/>
    <property type="project" value="TreeGrafter"/>
</dbReference>
<dbReference type="GO" id="GO:0043165">
    <property type="term" value="P:Gram-negative-bacterium-type cell outer membrane assembly"/>
    <property type="evidence" value="ECO:0007669"/>
    <property type="project" value="UniProtKB-UniRule"/>
</dbReference>
<dbReference type="GO" id="GO:0015920">
    <property type="term" value="P:lipopolysaccharide transport"/>
    <property type="evidence" value="ECO:0007669"/>
    <property type="project" value="InterPro"/>
</dbReference>
<dbReference type="HAMAP" id="MF_01411">
    <property type="entry name" value="LPS_assembly_LptD"/>
    <property type="match status" value="1"/>
</dbReference>
<dbReference type="InterPro" id="IPR020889">
    <property type="entry name" value="LipoPS_assembly_LptD"/>
</dbReference>
<dbReference type="InterPro" id="IPR050218">
    <property type="entry name" value="LptD"/>
</dbReference>
<dbReference type="InterPro" id="IPR007543">
    <property type="entry name" value="LptD_C"/>
</dbReference>
<dbReference type="PANTHER" id="PTHR30189">
    <property type="entry name" value="LPS-ASSEMBLY PROTEIN"/>
    <property type="match status" value="1"/>
</dbReference>
<dbReference type="PANTHER" id="PTHR30189:SF1">
    <property type="entry name" value="LPS-ASSEMBLY PROTEIN LPTD"/>
    <property type="match status" value="1"/>
</dbReference>
<dbReference type="Pfam" id="PF04453">
    <property type="entry name" value="LptD"/>
    <property type="match status" value="1"/>
</dbReference>
<name>LPTD_BURO1</name>
<evidence type="ECO:0000255" key="1">
    <source>
        <dbReference type="HAMAP-Rule" id="MF_01411"/>
    </source>
</evidence>
<evidence type="ECO:0000256" key="2">
    <source>
        <dbReference type="SAM" id="MobiDB-lite"/>
    </source>
</evidence>
<organism>
    <name type="scientific">Burkholderia orbicola (strain AU 1054)</name>
    <dbReference type="NCBI Taxonomy" id="331271"/>
    <lineage>
        <taxon>Bacteria</taxon>
        <taxon>Pseudomonadati</taxon>
        <taxon>Pseudomonadota</taxon>
        <taxon>Betaproteobacteria</taxon>
        <taxon>Burkholderiales</taxon>
        <taxon>Burkholderiaceae</taxon>
        <taxon>Burkholderia</taxon>
        <taxon>Burkholderia cepacia complex</taxon>
        <taxon>Burkholderia orbicola</taxon>
    </lineage>
</organism>
<comment type="function">
    <text evidence="1">Together with LptE, is involved in the assembly of lipopolysaccharide (LPS) at the surface of the outer membrane.</text>
</comment>
<comment type="subunit">
    <text evidence="1">Component of the lipopolysaccharide transport and assembly complex. Interacts with LptE and LptA.</text>
</comment>
<comment type="subcellular location">
    <subcellularLocation>
        <location evidence="1">Cell outer membrane</location>
    </subcellularLocation>
</comment>
<comment type="similarity">
    <text evidence="1">Belongs to the LptD family.</text>
</comment>
<keyword id="KW-0998">Cell outer membrane</keyword>
<keyword id="KW-0472">Membrane</keyword>
<keyword id="KW-0732">Signal</keyword>